<protein>
    <recommendedName>
        <fullName>Putative auxin-responsive protein IAA28</fullName>
    </recommendedName>
    <alternativeName>
        <fullName>Indoleacetic acid-induced protein 28</fullName>
    </alternativeName>
</protein>
<proteinExistence type="uncertain"/>
<accession>P0C130</accession>
<accession>A0A0P0Y0B6</accession>
<accession>Q2R8Q0</accession>
<name>IAA28_ORYSJ</name>
<gene>
    <name type="primary">IAA28</name>
    <name type="ordered locus">Os11g0221200</name>
    <name type="ordered locus">LOC_Os11g11420</name>
</gene>
<organism>
    <name type="scientific">Oryza sativa subsp. japonica</name>
    <name type="common">Rice</name>
    <dbReference type="NCBI Taxonomy" id="39947"/>
    <lineage>
        <taxon>Eukaryota</taxon>
        <taxon>Viridiplantae</taxon>
        <taxon>Streptophyta</taxon>
        <taxon>Embryophyta</taxon>
        <taxon>Tracheophyta</taxon>
        <taxon>Spermatophyta</taxon>
        <taxon>Magnoliopsida</taxon>
        <taxon>Liliopsida</taxon>
        <taxon>Poales</taxon>
        <taxon>Poaceae</taxon>
        <taxon>BOP clade</taxon>
        <taxon>Oryzoideae</taxon>
        <taxon>Oryzeae</taxon>
        <taxon>Oryzinae</taxon>
        <taxon>Oryza</taxon>
        <taxon>Oryza sativa</taxon>
    </lineage>
</organism>
<feature type="chain" id="PRO_0000223227" description="Putative auxin-responsive protein IAA28">
    <location>
        <begin position="1"/>
        <end position="162"/>
    </location>
</feature>
<feature type="domain" description="PB1" evidence="2">
    <location>
        <begin position="23"/>
        <end position="118"/>
    </location>
</feature>
<feature type="region of interest" description="Disordered" evidence="3">
    <location>
        <begin position="122"/>
        <end position="141"/>
    </location>
</feature>
<sequence>MGRMKDRNASAGPEVKPAGLSPSRFVKVFMHGEPFERKINLAIHNNYDSLSFTLKRLGNNYSMSPFELEGFVNNEEDGAIDNDFDLLYDDMNGVRYLLGEVPWEVFTITVKRIYIVPAEQQNESEYQEEEEDNAAAAATADEDVDGNHWWRNHLWSVGPILQ</sequence>
<comment type="function">
    <text evidence="1">Aux/IAA proteins are short-lived transcriptional factors that function as repressors of early auxin response genes at low auxin concentrations.</text>
</comment>
<comment type="subunit">
    <text evidence="1">Homodimers and heterodimers.</text>
</comment>
<comment type="subcellular location">
    <subcellularLocation>
        <location evidence="1">Nucleus</location>
    </subcellularLocation>
</comment>
<comment type="miscellaneous">
    <text>Lacks the EAR-like motif (domain I) which is conserved in the Aux/IAA family.</text>
</comment>
<comment type="similarity">
    <text evidence="4">Belongs to the Aux/IAA family.</text>
</comment>
<comment type="caution">
    <text evidence="4">Could be the product of a pseudogene.</text>
</comment>
<comment type="sequence caution" evidence="4">
    <conflict type="erroneous initiation">
        <sequence resource="EMBL-CDS" id="ABA92105"/>
    </conflict>
    <text>Truncated N-terminus.</text>
</comment>
<reference key="1">
    <citation type="journal article" date="2005" name="BMC Biol.">
        <title>The sequence of rice chromosomes 11 and 12, rich in disease resistance genes and recent gene duplications.</title>
        <authorList>
            <consortium name="The rice chromosomes 11 and 12 sequencing consortia"/>
        </authorList>
    </citation>
    <scope>NUCLEOTIDE SEQUENCE [LARGE SCALE GENOMIC DNA]</scope>
    <source>
        <strain>cv. Nipponbare</strain>
    </source>
</reference>
<reference key="2">
    <citation type="journal article" date="2005" name="Nature">
        <title>The map-based sequence of the rice genome.</title>
        <authorList>
            <consortium name="International rice genome sequencing project (IRGSP)"/>
        </authorList>
    </citation>
    <scope>NUCLEOTIDE SEQUENCE [LARGE SCALE GENOMIC DNA]</scope>
    <source>
        <strain>cv. Nipponbare</strain>
    </source>
</reference>
<reference key="3">
    <citation type="journal article" date="2008" name="Nucleic Acids Res.">
        <title>The rice annotation project database (RAP-DB): 2008 update.</title>
        <authorList>
            <consortium name="The rice annotation project (RAP)"/>
        </authorList>
    </citation>
    <scope>GENOME REANNOTATION</scope>
    <source>
        <strain>cv. Nipponbare</strain>
    </source>
</reference>
<reference key="4">
    <citation type="journal article" date="2013" name="Rice">
        <title>Improvement of the Oryza sativa Nipponbare reference genome using next generation sequence and optical map data.</title>
        <authorList>
            <person name="Kawahara Y."/>
            <person name="de la Bastide M."/>
            <person name="Hamilton J.P."/>
            <person name="Kanamori H."/>
            <person name="McCombie W.R."/>
            <person name="Ouyang S."/>
            <person name="Schwartz D.C."/>
            <person name="Tanaka T."/>
            <person name="Wu J."/>
            <person name="Zhou S."/>
            <person name="Childs K.L."/>
            <person name="Davidson R.M."/>
            <person name="Lin H."/>
            <person name="Quesada-Ocampo L."/>
            <person name="Vaillancourt B."/>
            <person name="Sakai H."/>
            <person name="Lee S.S."/>
            <person name="Kim J."/>
            <person name="Numa H."/>
            <person name="Itoh T."/>
            <person name="Buell C.R."/>
            <person name="Matsumoto T."/>
        </authorList>
    </citation>
    <scope>GENOME REANNOTATION</scope>
    <source>
        <strain>cv. Nipponbare</strain>
    </source>
</reference>
<reference key="5">
    <citation type="journal article" date="2006" name="Funct. Integr. Genomics">
        <title>Structure and expression analysis of early auxin-responsive Aux/IAA gene family in rice (Oryza sativa).</title>
        <authorList>
            <person name="Jain M."/>
            <person name="Kaur N."/>
            <person name="Garg R."/>
            <person name="Thakur J.K."/>
            <person name="Tyagi A.K."/>
            <person name="Khurana J.P."/>
        </authorList>
    </citation>
    <scope>NOMENCLATURE</scope>
</reference>
<dbReference type="EMBL" id="DP000010">
    <property type="protein sequence ID" value="ABA92105.2"/>
    <property type="status" value="ALT_INIT"/>
    <property type="molecule type" value="Genomic_DNA"/>
</dbReference>
<dbReference type="EMBL" id="AP008217">
    <property type="status" value="NOT_ANNOTATED_CDS"/>
    <property type="molecule type" value="Genomic_DNA"/>
</dbReference>
<dbReference type="EMBL" id="AP014967">
    <property type="protein sequence ID" value="BAT13252.1"/>
    <property type="molecule type" value="Genomic_DNA"/>
</dbReference>
<dbReference type="SMR" id="P0C130"/>
<dbReference type="FunCoup" id="P0C130">
    <property type="interactions" value="107"/>
</dbReference>
<dbReference type="STRING" id="39947.P0C130"/>
<dbReference type="PaxDb" id="39947-P0C130"/>
<dbReference type="EnsemblPlants" id="Os11t0221200-00">
    <property type="protein sequence ID" value="Os11t0221200-00"/>
    <property type="gene ID" value="Os11g0221200"/>
</dbReference>
<dbReference type="Gramene" id="Os11t0221200-00">
    <property type="protein sequence ID" value="Os11t0221200-00"/>
    <property type="gene ID" value="Os11g0221200"/>
</dbReference>
<dbReference type="eggNOG" id="ENOG502R5WP">
    <property type="taxonomic scope" value="Eukaryota"/>
</dbReference>
<dbReference type="HOGENOM" id="CLU_117842_0_0_1"/>
<dbReference type="InParanoid" id="P0C130"/>
<dbReference type="OMA" id="PFERKIN"/>
<dbReference type="Proteomes" id="UP000000763">
    <property type="component" value="Chromosome 11"/>
</dbReference>
<dbReference type="Proteomes" id="UP000059680">
    <property type="component" value="Chromosome 11"/>
</dbReference>
<dbReference type="GO" id="GO:0005634">
    <property type="term" value="C:nucleus"/>
    <property type="evidence" value="ECO:0007669"/>
    <property type="project" value="UniProtKB-SubCell"/>
</dbReference>
<dbReference type="GO" id="GO:0009734">
    <property type="term" value="P:auxin-activated signaling pathway"/>
    <property type="evidence" value="ECO:0007669"/>
    <property type="project" value="UniProtKB-KW"/>
</dbReference>
<dbReference type="GO" id="GO:0006355">
    <property type="term" value="P:regulation of DNA-templated transcription"/>
    <property type="evidence" value="ECO:0007669"/>
    <property type="project" value="InterPro"/>
</dbReference>
<dbReference type="Gene3D" id="3.10.20.90">
    <property type="entry name" value="Phosphatidylinositol 3-kinase Catalytic Subunit, Chain A, domain 1"/>
    <property type="match status" value="1"/>
</dbReference>
<dbReference type="InterPro" id="IPR033389">
    <property type="entry name" value="AUX/IAA_dom"/>
</dbReference>
<dbReference type="InterPro" id="IPR003311">
    <property type="entry name" value="AUX_IAA"/>
</dbReference>
<dbReference type="InterPro" id="IPR053793">
    <property type="entry name" value="PB1-like"/>
</dbReference>
<dbReference type="PANTHER" id="PTHR31734">
    <property type="entry name" value="AUXIN-RESPONSIVE PROTEIN IAA17"/>
    <property type="match status" value="1"/>
</dbReference>
<dbReference type="PANTHER" id="PTHR31734:SF41">
    <property type="entry name" value="AUXIN-RESPONSIVE PROTEIN IAA28-RELATED"/>
    <property type="match status" value="1"/>
</dbReference>
<dbReference type="Pfam" id="PF02309">
    <property type="entry name" value="AUX_IAA"/>
    <property type="match status" value="1"/>
</dbReference>
<dbReference type="SUPFAM" id="SSF54277">
    <property type="entry name" value="CAD &amp; PB1 domains"/>
    <property type="match status" value="1"/>
</dbReference>
<dbReference type="PROSITE" id="PS51745">
    <property type="entry name" value="PB1"/>
    <property type="match status" value="1"/>
</dbReference>
<evidence type="ECO:0000250" key="1"/>
<evidence type="ECO:0000255" key="2">
    <source>
        <dbReference type="PROSITE-ProRule" id="PRU01081"/>
    </source>
</evidence>
<evidence type="ECO:0000256" key="3">
    <source>
        <dbReference type="SAM" id="MobiDB-lite"/>
    </source>
</evidence>
<evidence type="ECO:0000305" key="4"/>
<keyword id="KW-0927">Auxin signaling pathway</keyword>
<keyword id="KW-0539">Nucleus</keyword>
<keyword id="KW-1185">Reference proteome</keyword>
<keyword id="KW-0678">Repressor</keyword>
<keyword id="KW-0804">Transcription</keyword>
<keyword id="KW-0805">Transcription regulation</keyword>